<sequence>MKLSTLFTLATTISTLTTFTIASPVVVVEKRAINETALAEDIPTTKNNHAQASYGKPFAIYQPKAFIISMFSLERDPWLKAMDFVHNITIPGLSPVYPDIHCTTNYTICQITTGEGEINAASSISALTLNPLFDLTKTYFLVGGIAGGEPNYTTIGGVTFAKYAVQVGLEYQLAYEDYHKTNPDWISGYIPYGTDDQNTYPGNVYGTEVFEVNEKLRDRAVELASKVHLNNGTEGNAKFRKLYNETAAQGLPKVVKCDSLTSDNYFTGNVLNDYFANFTLLMTNGSATYCSTAQEDNATLEVMTRLAKHGLVDYDRIMIMRTISDFSRPPPSMSAYEYFFNRSDGGISASLENLVIAGTPIIHDIVQNWDKIYKSGEKYSSKNYVGDIFATLGGKPDFGKESFDTA</sequence>
<evidence type="ECO:0000255" key="1"/>
<evidence type="ECO:0000269" key="2">
    <source>
    </source>
</evidence>
<evidence type="ECO:0000303" key="3">
    <source>
    </source>
</evidence>
<evidence type="ECO:0000305" key="4"/>
<name>NUP_CANAX</name>
<protein>
    <recommendedName>
        <fullName evidence="3">Purine nucleoside permease</fullName>
    </recommendedName>
</protein>
<comment type="function">
    <text evidence="2">Nucleoside permease that transports adenosine and guanosine. Does not show any transport activities towards cytidine, adenine, guanine, uridine, and uracil.</text>
</comment>
<comment type="activity regulation">
    <text evidence="2">Mammalian nucleoside transport inhibitors dipyridamole and NBMPR inhibit adenosine transport by NUP.</text>
</comment>
<comment type="similarity">
    <text evidence="4">Belongs to the NUP family.</text>
</comment>
<organism>
    <name type="scientific">Candida albicans</name>
    <name type="common">Yeast</name>
    <dbReference type="NCBI Taxonomy" id="5476"/>
    <lineage>
        <taxon>Eukaryota</taxon>
        <taxon>Fungi</taxon>
        <taxon>Dikarya</taxon>
        <taxon>Ascomycota</taxon>
        <taxon>Saccharomycotina</taxon>
        <taxon>Pichiomycetes</taxon>
        <taxon>Debaryomycetaceae</taxon>
        <taxon>Candida/Lodderomyces clade</taxon>
        <taxon>Candida</taxon>
    </lineage>
</organism>
<gene>
    <name evidence="3" type="primary">NUP</name>
</gene>
<dbReference type="EMBL" id="AF016246">
    <property type="protein sequence ID" value="AAC64324.1"/>
    <property type="molecule type" value="Genomic_DNA"/>
</dbReference>
<dbReference type="SMR" id="O93844"/>
<dbReference type="VEuPathDB" id="FungiDB:C7_01560C_A"/>
<dbReference type="VEuPathDB" id="FungiDB:CAWG_05507"/>
<dbReference type="GO" id="GO:0005783">
    <property type="term" value="C:endoplasmic reticulum"/>
    <property type="evidence" value="ECO:0007669"/>
    <property type="project" value="TreeGrafter"/>
</dbReference>
<dbReference type="GO" id="GO:0003824">
    <property type="term" value="F:catalytic activity"/>
    <property type="evidence" value="ECO:0007669"/>
    <property type="project" value="InterPro"/>
</dbReference>
<dbReference type="GO" id="GO:0009116">
    <property type="term" value="P:nucleoside metabolic process"/>
    <property type="evidence" value="ECO:0007669"/>
    <property type="project" value="InterPro"/>
</dbReference>
<dbReference type="GO" id="GO:0055085">
    <property type="term" value="P:transmembrane transport"/>
    <property type="evidence" value="ECO:0007669"/>
    <property type="project" value="InterPro"/>
</dbReference>
<dbReference type="FunFam" id="3.40.50.1580:FF:000023">
    <property type="entry name" value="Purine nucleoside permease"/>
    <property type="match status" value="1"/>
</dbReference>
<dbReference type="Gene3D" id="3.40.50.1580">
    <property type="entry name" value="Nucleoside phosphorylase domain"/>
    <property type="match status" value="1"/>
</dbReference>
<dbReference type="InterPro" id="IPR035994">
    <property type="entry name" value="Nucleoside_phosphorylase_sf"/>
</dbReference>
<dbReference type="InterPro" id="IPR009486">
    <property type="entry name" value="Pur_nuclsid_perm"/>
</dbReference>
<dbReference type="PANTHER" id="PTHR38643">
    <property type="entry name" value="PURINE NUCLEOSIDE PERMEASE C285.05-RELATED"/>
    <property type="match status" value="1"/>
</dbReference>
<dbReference type="PANTHER" id="PTHR38643:SF1">
    <property type="entry name" value="PURINE NUCLEOSIDE PERMEASE C285.05-RELATED"/>
    <property type="match status" value="1"/>
</dbReference>
<dbReference type="Pfam" id="PF06516">
    <property type="entry name" value="NUP"/>
    <property type="match status" value="1"/>
</dbReference>
<dbReference type="PIRSF" id="PIRSF013171">
    <property type="entry name" value="Pur_nuclsid_perm"/>
    <property type="match status" value="1"/>
</dbReference>
<accession>O93844</accession>
<keyword id="KW-0732">Signal</keyword>
<keyword id="KW-0813">Transport</keyword>
<feature type="signal peptide" evidence="1">
    <location>
        <begin position="1"/>
        <end position="22"/>
    </location>
</feature>
<feature type="chain" id="PRO_0000431100" description="Purine nucleoside permease" evidence="1">
    <location>
        <begin position="23"/>
        <end position="406"/>
    </location>
</feature>
<proteinExistence type="inferred from homology"/>
<reference key="1">
    <citation type="journal article" date="1998" name="Yeast">
        <title>Cloning of the Candida albicans nucleoside transporter by complementation of nucleoside transport-deficient Saccharomyces.</title>
        <authorList>
            <person name="Detke S."/>
        </authorList>
    </citation>
    <scope>NUCLEOTIDE SEQUENCE [GENOMIC DNA]</scope>
    <scope>FUNCTION</scope>
    <scope>ACTIVITY REGULATION</scope>
</reference>